<sequence>MSAQENSAPFLRIPPWLRTRIPCNRTYTATRELIGDLNLHTVCQSAKCPNMFECFSSRTATFLILGGTCTRNCAFCNIEPGDVLPPDAGEPQRVALAAARLELKHVVITSVTRDDLPDGGAAHFAATIQAVRSRLPRCTVEVLIPDFQGDAAALQTVLQARPDVLNHNVETPPAHYSRIRPQADYSQSLELLRRARAAGFTVKSGLMTGLGETDAEVLGVIDDLCATGCNIVTVGQYMRPSRRHPAVQRYVHPDMFEEYAAYGRARGIPHMFCAPLVRSSYNASMFVQEKN</sequence>
<accession>Q30XT6</accession>
<keyword id="KW-0004">4Fe-4S</keyword>
<keyword id="KW-0963">Cytoplasm</keyword>
<keyword id="KW-0408">Iron</keyword>
<keyword id="KW-0411">Iron-sulfur</keyword>
<keyword id="KW-0479">Metal-binding</keyword>
<keyword id="KW-1185">Reference proteome</keyword>
<keyword id="KW-0949">S-adenosyl-L-methionine</keyword>
<keyword id="KW-0808">Transferase</keyword>
<name>LIPA_OLEA2</name>
<evidence type="ECO:0000255" key="1">
    <source>
        <dbReference type="HAMAP-Rule" id="MF_00206"/>
    </source>
</evidence>
<evidence type="ECO:0000255" key="2">
    <source>
        <dbReference type="PROSITE-ProRule" id="PRU01266"/>
    </source>
</evidence>
<proteinExistence type="inferred from homology"/>
<protein>
    <recommendedName>
        <fullName evidence="1">Lipoyl synthase</fullName>
        <ecNumber evidence="1">2.8.1.8</ecNumber>
    </recommendedName>
    <alternativeName>
        <fullName evidence="1">Lip-syn</fullName>
        <shortName evidence="1">LS</shortName>
    </alternativeName>
    <alternativeName>
        <fullName evidence="1">Lipoate synthase</fullName>
    </alternativeName>
    <alternativeName>
        <fullName evidence="1">Lipoic acid synthase</fullName>
    </alternativeName>
    <alternativeName>
        <fullName evidence="1">Sulfur insertion protein LipA</fullName>
    </alternativeName>
</protein>
<gene>
    <name evidence="1" type="primary">lipA</name>
    <name type="ordered locus">Dde_2714</name>
</gene>
<reference key="1">
    <citation type="journal article" date="2011" name="J. Bacteriol.">
        <title>Complete genome sequence and updated annotation of Desulfovibrio alaskensis G20.</title>
        <authorList>
            <person name="Hauser L.J."/>
            <person name="Land M.L."/>
            <person name="Brown S.D."/>
            <person name="Larimer F."/>
            <person name="Keller K.L."/>
            <person name="Rapp-Giles B.J."/>
            <person name="Price M.N."/>
            <person name="Lin M."/>
            <person name="Bruce D.C."/>
            <person name="Detter J.C."/>
            <person name="Tapia R."/>
            <person name="Han C.S."/>
            <person name="Goodwin L.A."/>
            <person name="Cheng J.F."/>
            <person name="Pitluck S."/>
            <person name="Copeland A."/>
            <person name="Lucas S."/>
            <person name="Nolan M."/>
            <person name="Lapidus A.L."/>
            <person name="Palumbo A.V."/>
            <person name="Wall J.D."/>
        </authorList>
    </citation>
    <scope>NUCLEOTIDE SEQUENCE [LARGE SCALE GENOMIC DNA]</scope>
    <source>
        <strain>ATCC BAA-1058 / DSM 17464 / G20</strain>
    </source>
</reference>
<organism>
    <name type="scientific">Oleidesulfovibrio alaskensis (strain ATCC BAA-1058 / DSM 17464 / G20)</name>
    <name type="common">Desulfovibrio alaskensis</name>
    <dbReference type="NCBI Taxonomy" id="207559"/>
    <lineage>
        <taxon>Bacteria</taxon>
        <taxon>Pseudomonadati</taxon>
        <taxon>Thermodesulfobacteriota</taxon>
        <taxon>Desulfovibrionia</taxon>
        <taxon>Desulfovibrionales</taxon>
        <taxon>Desulfovibrionaceae</taxon>
        <taxon>Oleidesulfovibrio</taxon>
    </lineage>
</organism>
<feature type="chain" id="PRO_0000325246" description="Lipoyl synthase">
    <location>
        <begin position="1"/>
        <end position="291"/>
    </location>
</feature>
<feature type="domain" description="Radical SAM core" evidence="2">
    <location>
        <begin position="55"/>
        <end position="269"/>
    </location>
</feature>
<feature type="binding site" evidence="1">
    <location>
        <position position="43"/>
    </location>
    <ligand>
        <name>[4Fe-4S] cluster</name>
        <dbReference type="ChEBI" id="CHEBI:49883"/>
        <label>1</label>
    </ligand>
</feature>
<feature type="binding site" evidence="1">
    <location>
        <position position="48"/>
    </location>
    <ligand>
        <name>[4Fe-4S] cluster</name>
        <dbReference type="ChEBI" id="CHEBI:49883"/>
        <label>1</label>
    </ligand>
</feature>
<feature type="binding site" evidence="1">
    <location>
        <position position="54"/>
    </location>
    <ligand>
        <name>[4Fe-4S] cluster</name>
        <dbReference type="ChEBI" id="CHEBI:49883"/>
        <label>1</label>
    </ligand>
</feature>
<feature type="binding site" evidence="1">
    <location>
        <position position="69"/>
    </location>
    <ligand>
        <name>[4Fe-4S] cluster</name>
        <dbReference type="ChEBI" id="CHEBI:49883"/>
        <label>2</label>
        <note>4Fe-4S-S-AdoMet</note>
    </ligand>
</feature>
<feature type="binding site" evidence="1">
    <location>
        <position position="73"/>
    </location>
    <ligand>
        <name>[4Fe-4S] cluster</name>
        <dbReference type="ChEBI" id="CHEBI:49883"/>
        <label>2</label>
        <note>4Fe-4S-S-AdoMet</note>
    </ligand>
</feature>
<feature type="binding site" evidence="1">
    <location>
        <position position="76"/>
    </location>
    <ligand>
        <name>[4Fe-4S] cluster</name>
        <dbReference type="ChEBI" id="CHEBI:49883"/>
        <label>2</label>
        <note>4Fe-4S-S-AdoMet</note>
    </ligand>
</feature>
<feature type="binding site" evidence="1">
    <location>
        <position position="280"/>
    </location>
    <ligand>
        <name>[4Fe-4S] cluster</name>
        <dbReference type="ChEBI" id="CHEBI:49883"/>
        <label>1</label>
    </ligand>
</feature>
<dbReference type="EC" id="2.8.1.8" evidence="1"/>
<dbReference type="EMBL" id="CP000112">
    <property type="protein sequence ID" value="ABB39510.1"/>
    <property type="molecule type" value="Genomic_DNA"/>
</dbReference>
<dbReference type="RefSeq" id="WP_011368536.1">
    <property type="nucleotide sequence ID" value="NC_007519.1"/>
</dbReference>
<dbReference type="SMR" id="Q30XT6"/>
<dbReference type="STRING" id="207559.Dde_2714"/>
<dbReference type="KEGG" id="dde:Dde_2714"/>
<dbReference type="eggNOG" id="COG0320">
    <property type="taxonomic scope" value="Bacteria"/>
</dbReference>
<dbReference type="HOGENOM" id="CLU_033144_2_1_7"/>
<dbReference type="UniPathway" id="UPA00538">
    <property type="reaction ID" value="UER00593"/>
</dbReference>
<dbReference type="Proteomes" id="UP000002710">
    <property type="component" value="Chromosome"/>
</dbReference>
<dbReference type="GO" id="GO:0005737">
    <property type="term" value="C:cytoplasm"/>
    <property type="evidence" value="ECO:0007669"/>
    <property type="project" value="UniProtKB-SubCell"/>
</dbReference>
<dbReference type="GO" id="GO:0051539">
    <property type="term" value="F:4 iron, 4 sulfur cluster binding"/>
    <property type="evidence" value="ECO:0007669"/>
    <property type="project" value="UniProtKB-UniRule"/>
</dbReference>
<dbReference type="GO" id="GO:0016992">
    <property type="term" value="F:lipoate synthase activity"/>
    <property type="evidence" value="ECO:0007669"/>
    <property type="project" value="UniProtKB-UniRule"/>
</dbReference>
<dbReference type="GO" id="GO:0046872">
    <property type="term" value="F:metal ion binding"/>
    <property type="evidence" value="ECO:0007669"/>
    <property type="project" value="UniProtKB-KW"/>
</dbReference>
<dbReference type="CDD" id="cd01335">
    <property type="entry name" value="Radical_SAM"/>
    <property type="match status" value="1"/>
</dbReference>
<dbReference type="Gene3D" id="3.20.20.70">
    <property type="entry name" value="Aldolase class I"/>
    <property type="match status" value="1"/>
</dbReference>
<dbReference type="HAMAP" id="MF_00206">
    <property type="entry name" value="Lipoyl_synth"/>
    <property type="match status" value="1"/>
</dbReference>
<dbReference type="InterPro" id="IPR013785">
    <property type="entry name" value="Aldolase_TIM"/>
</dbReference>
<dbReference type="InterPro" id="IPR006638">
    <property type="entry name" value="Elp3/MiaA/NifB-like_rSAM"/>
</dbReference>
<dbReference type="InterPro" id="IPR031691">
    <property type="entry name" value="LIAS_N"/>
</dbReference>
<dbReference type="InterPro" id="IPR003698">
    <property type="entry name" value="Lipoyl_synth"/>
</dbReference>
<dbReference type="InterPro" id="IPR007197">
    <property type="entry name" value="rSAM"/>
</dbReference>
<dbReference type="NCBIfam" id="TIGR00510">
    <property type="entry name" value="lipA"/>
    <property type="match status" value="1"/>
</dbReference>
<dbReference type="NCBIfam" id="NF004019">
    <property type="entry name" value="PRK05481.1"/>
    <property type="match status" value="1"/>
</dbReference>
<dbReference type="NCBIfam" id="NF009544">
    <property type="entry name" value="PRK12928.1"/>
    <property type="match status" value="1"/>
</dbReference>
<dbReference type="PANTHER" id="PTHR10949">
    <property type="entry name" value="LIPOYL SYNTHASE"/>
    <property type="match status" value="1"/>
</dbReference>
<dbReference type="PANTHER" id="PTHR10949:SF0">
    <property type="entry name" value="LIPOYL SYNTHASE, MITOCHONDRIAL"/>
    <property type="match status" value="1"/>
</dbReference>
<dbReference type="Pfam" id="PF16881">
    <property type="entry name" value="LIAS_N"/>
    <property type="match status" value="1"/>
</dbReference>
<dbReference type="Pfam" id="PF04055">
    <property type="entry name" value="Radical_SAM"/>
    <property type="match status" value="1"/>
</dbReference>
<dbReference type="PIRSF" id="PIRSF005963">
    <property type="entry name" value="Lipoyl_synth"/>
    <property type="match status" value="1"/>
</dbReference>
<dbReference type="SFLD" id="SFLDF00271">
    <property type="entry name" value="lipoyl_synthase"/>
    <property type="match status" value="1"/>
</dbReference>
<dbReference type="SFLD" id="SFLDS00029">
    <property type="entry name" value="Radical_SAM"/>
    <property type="match status" value="1"/>
</dbReference>
<dbReference type="SMART" id="SM00729">
    <property type="entry name" value="Elp3"/>
    <property type="match status" value="1"/>
</dbReference>
<dbReference type="SUPFAM" id="SSF102114">
    <property type="entry name" value="Radical SAM enzymes"/>
    <property type="match status" value="1"/>
</dbReference>
<dbReference type="PROSITE" id="PS51918">
    <property type="entry name" value="RADICAL_SAM"/>
    <property type="match status" value="1"/>
</dbReference>
<comment type="function">
    <text evidence="1">Catalyzes the radical-mediated insertion of two sulfur atoms into the C-6 and C-8 positions of the octanoyl moiety bound to the lipoyl domains of lipoate-dependent enzymes, thereby converting the octanoylated domains into lipoylated derivatives.</text>
</comment>
<comment type="catalytic activity">
    <reaction evidence="1">
        <text>[[Fe-S] cluster scaffold protein carrying a second [4Fe-4S](2+) cluster] + N(6)-octanoyl-L-lysyl-[protein] + 2 oxidized [2Fe-2S]-[ferredoxin] + 2 S-adenosyl-L-methionine + 4 H(+) = [[Fe-S] cluster scaffold protein] + N(6)-[(R)-dihydrolipoyl]-L-lysyl-[protein] + 4 Fe(3+) + 2 hydrogen sulfide + 2 5'-deoxyadenosine + 2 L-methionine + 2 reduced [2Fe-2S]-[ferredoxin]</text>
        <dbReference type="Rhea" id="RHEA:16585"/>
        <dbReference type="Rhea" id="RHEA-COMP:9928"/>
        <dbReference type="Rhea" id="RHEA-COMP:10000"/>
        <dbReference type="Rhea" id="RHEA-COMP:10001"/>
        <dbReference type="Rhea" id="RHEA-COMP:10475"/>
        <dbReference type="Rhea" id="RHEA-COMP:14568"/>
        <dbReference type="Rhea" id="RHEA-COMP:14569"/>
        <dbReference type="ChEBI" id="CHEBI:15378"/>
        <dbReference type="ChEBI" id="CHEBI:17319"/>
        <dbReference type="ChEBI" id="CHEBI:29034"/>
        <dbReference type="ChEBI" id="CHEBI:29919"/>
        <dbReference type="ChEBI" id="CHEBI:33722"/>
        <dbReference type="ChEBI" id="CHEBI:33737"/>
        <dbReference type="ChEBI" id="CHEBI:33738"/>
        <dbReference type="ChEBI" id="CHEBI:57844"/>
        <dbReference type="ChEBI" id="CHEBI:59789"/>
        <dbReference type="ChEBI" id="CHEBI:78809"/>
        <dbReference type="ChEBI" id="CHEBI:83100"/>
        <dbReference type="EC" id="2.8.1.8"/>
    </reaction>
</comment>
<comment type="cofactor">
    <cofactor evidence="1">
        <name>[4Fe-4S] cluster</name>
        <dbReference type="ChEBI" id="CHEBI:49883"/>
    </cofactor>
    <text evidence="1">Binds 2 [4Fe-4S] clusters per subunit. One cluster is coordinated with 3 cysteines and an exchangeable S-adenosyl-L-methionine.</text>
</comment>
<comment type="pathway">
    <text evidence="1">Protein modification; protein lipoylation via endogenous pathway; protein N(6)-(lipoyl)lysine from octanoyl-[acyl-carrier-protein]: step 2/2.</text>
</comment>
<comment type="subcellular location">
    <subcellularLocation>
        <location evidence="1">Cytoplasm</location>
    </subcellularLocation>
</comment>
<comment type="similarity">
    <text evidence="1">Belongs to the radical SAM superfamily. Lipoyl synthase family.</text>
</comment>